<protein>
    <recommendedName>
        <fullName evidence="1">Thiosulfate sulfurtransferase GlpE</fullName>
        <ecNumber evidence="1">2.8.1.1</ecNumber>
    </recommendedName>
</protein>
<feature type="chain" id="PRO_1000072904" description="Thiosulfate sulfurtransferase GlpE">
    <location>
        <begin position="1"/>
        <end position="106"/>
    </location>
</feature>
<feature type="domain" description="Rhodanese" evidence="1">
    <location>
        <begin position="17"/>
        <end position="105"/>
    </location>
</feature>
<feature type="active site" description="Cysteine persulfide intermediate" evidence="1">
    <location>
        <position position="65"/>
    </location>
</feature>
<sequence>MDHFLHIDVNAAQAMMEQKQAHLVDIRDPQSFQLAHAKNAYHLTNQSMVQFMEQAEFDQPVLVMCYHGISSQGAAQYLVNQGFEEVYSVDGGFEAWHRANLPIEAS</sequence>
<dbReference type="EC" id="2.8.1.1" evidence="1"/>
<dbReference type="EMBL" id="CP000627">
    <property type="protein sequence ID" value="ABQ20726.1"/>
    <property type="molecule type" value="Genomic_DNA"/>
</dbReference>
<dbReference type="EMBL" id="CP001235">
    <property type="protein sequence ID" value="ACP08108.1"/>
    <property type="molecule type" value="Genomic_DNA"/>
</dbReference>
<dbReference type="RefSeq" id="WP_000349528.1">
    <property type="nucleotide sequence ID" value="NZ_JAACZH010000014.1"/>
</dbReference>
<dbReference type="SMR" id="A5F4G9"/>
<dbReference type="GeneID" id="89513194"/>
<dbReference type="KEGG" id="vco:VC0395_A2416"/>
<dbReference type="KEGG" id="vcr:VC395_0080"/>
<dbReference type="PATRIC" id="fig|345073.21.peg.73"/>
<dbReference type="eggNOG" id="COG0607">
    <property type="taxonomic scope" value="Bacteria"/>
</dbReference>
<dbReference type="HOGENOM" id="CLU_089574_14_0_6"/>
<dbReference type="OrthoDB" id="9811849at2"/>
<dbReference type="Proteomes" id="UP000000249">
    <property type="component" value="Chromosome 2"/>
</dbReference>
<dbReference type="GO" id="GO:0005737">
    <property type="term" value="C:cytoplasm"/>
    <property type="evidence" value="ECO:0007669"/>
    <property type="project" value="UniProtKB-SubCell"/>
</dbReference>
<dbReference type="GO" id="GO:0004792">
    <property type="term" value="F:thiosulfate-cyanide sulfurtransferase activity"/>
    <property type="evidence" value="ECO:0007669"/>
    <property type="project" value="UniProtKB-UniRule"/>
</dbReference>
<dbReference type="GO" id="GO:0006071">
    <property type="term" value="P:glycerol metabolic process"/>
    <property type="evidence" value="ECO:0007669"/>
    <property type="project" value="UniProtKB-UniRule"/>
</dbReference>
<dbReference type="CDD" id="cd01444">
    <property type="entry name" value="GlpE_ST"/>
    <property type="match status" value="1"/>
</dbReference>
<dbReference type="FunFam" id="3.40.250.10:FF:000007">
    <property type="entry name" value="Thiosulfate sulfurtransferase GlpE"/>
    <property type="match status" value="1"/>
</dbReference>
<dbReference type="Gene3D" id="3.40.250.10">
    <property type="entry name" value="Rhodanese-like domain"/>
    <property type="match status" value="1"/>
</dbReference>
<dbReference type="HAMAP" id="MF_01009">
    <property type="entry name" value="Thiosulf_sulfurtr"/>
    <property type="match status" value="1"/>
</dbReference>
<dbReference type="InterPro" id="IPR050229">
    <property type="entry name" value="GlpE_sulfurtransferase"/>
</dbReference>
<dbReference type="InterPro" id="IPR001763">
    <property type="entry name" value="Rhodanese-like_dom"/>
</dbReference>
<dbReference type="InterPro" id="IPR036873">
    <property type="entry name" value="Rhodanese-like_dom_sf"/>
</dbReference>
<dbReference type="InterPro" id="IPR023695">
    <property type="entry name" value="Thiosulf_sulfurTrfase"/>
</dbReference>
<dbReference type="NCBIfam" id="NF001195">
    <property type="entry name" value="PRK00162.1"/>
    <property type="match status" value="1"/>
</dbReference>
<dbReference type="PANTHER" id="PTHR43031">
    <property type="entry name" value="FAD-DEPENDENT OXIDOREDUCTASE"/>
    <property type="match status" value="1"/>
</dbReference>
<dbReference type="PANTHER" id="PTHR43031:SF6">
    <property type="entry name" value="THIOSULFATE SULFURTRANSFERASE GLPE"/>
    <property type="match status" value="1"/>
</dbReference>
<dbReference type="Pfam" id="PF00581">
    <property type="entry name" value="Rhodanese"/>
    <property type="match status" value="1"/>
</dbReference>
<dbReference type="SMART" id="SM00450">
    <property type="entry name" value="RHOD"/>
    <property type="match status" value="1"/>
</dbReference>
<dbReference type="SUPFAM" id="SSF52821">
    <property type="entry name" value="Rhodanese/Cell cycle control phosphatase"/>
    <property type="match status" value="1"/>
</dbReference>
<dbReference type="PROSITE" id="PS50206">
    <property type="entry name" value="RHODANESE_3"/>
    <property type="match status" value="1"/>
</dbReference>
<accession>A5F4G9</accession>
<accession>C3M2E4</accession>
<gene>
    <name evidence="1" type="primary">glpE</name>
    <name type="ordered locus">VC0395_A2416</name>
    <name type="ordered locus">VC395_0080</name>
</gene>
<organism>
    <name type="scientific">Vibrio cholerae serotype O1 (strain ATCC 39541 / Classical Ogawa 395 / O395)</name>
    <dbReference type="NCBI Taxonomy" id="345073"/>
    <lineage>
        <taxon>Bacteria</taxon>
        <taxon>Pseudomonadati</taxon>
        <taxon>Pseudomonadota</taxon>
        <taxon>Gammaproteobacteria</taxon>
        <taxon>Vibrionales</taxon>
        <taxon>Vibrionaceae</taxon>
        <taxon>Vibrio</taxon>
    </lineage>
</organism>
<proteinExistence type="inferred from homology"/>
<name>GLPE_VIBC3</name>
<keyword id="KW-0963">Cytoplasm</keyword>
<keyword id="KW-0808">Transferase</keyword>
<reference key="1">
    <citation type="submission" date="2007-03" db="EMBL/GenBank/DDBJ databases">
        <authorList>
            <person name="Heidelberg J."/>
        </authorList>
    </citation>
    <scope>NUCLEOTIDE SEQUENCE [LARGE SCALE GENOMIC DNA]</scope>
    <source>
        <strain>ATCC 39541 / Classical Ogawa 395 / O395</strain>
    </source>
</reference>
<reference key="2">
    <citation type="journal article" date="2008" name="PLoS ONE">
        <title>A recalibrated molecular clock and independent origins for the cholera pandemic clones.</title>
        <authorList>
            <person name="Feng L."/>
            <person name="Reeves P.R."/>
            <person name="Lan R."/>
            <person name="Ren Y."/>
            <person name="Gao C."/>
            <person name="Zhou Z."/>
            <person name="Ren Y."/>
            <person name="Cheng J."/>
            <person name="Wang W."/>
            <person name="Wang J."/>
            <person name="Qian W."/>
            <person name="Li D."/>
            <person name="Wang L."/>
        </authorList>
    </citation>
    <scope>NUCLEOTIDE SEQUENCE [LARGE SCALE GENOMIC DNA]</scope>
    <source>
        <strain>ATCC 39541 / Classical Ogawa 395 / O395</strain>
    </source>
</reference>
<evidence type="ECO:0000255" key="1">
    <source>
        <dbReference type="HAMAP-Rule" id="MF_01009"/>
    </source>
</evidence>
<comment type="function">
    <text evidence="1">Transferase that catalyzes the transfer of sulfur from thiosulfate to thiophilic acceptors such as cyanide or dithiols. May function in a CysM-independent thiosulfate assimilation pathway by catalyzing the conversion of thiosulfate to sulfite, which can then be used for L-cysteine biosynthesis.</text>
</comment>
<comment type="catalytic activity">
    <reaction evidence="1">
        <text>thiosulfate + hydrogen cyanide = thiocyanate + sulfite + 2 H(+)</text>
        <dbReference type="Rhea" id="RHEA:16881"/>
        <dbReference type="ChEBI" id="CHEBI:15378"/>
        <dbReference type="ChEBI" id="CHEBI:17359"/>
        <dbReference type="ChEBI" id="CHEBI:18022"/>
        <dbReference type="ChEBI" id="CHEBI:18407"/>
        <dbReference type="ChEBI" id="CHEBI:33542"/>
        <dbReference type="EC" id="2.8.1.1"/>
    </reaction>
</comment>
<comment type="catalytic activity">
    <reaction evidence="1">
        <text>thiosulfate + [thioredoxin]-dithiol = [thioredoxin]-disulfide + hydrogen sulfide + sulfite + 2 H(+)</text>
        <dbReference type="Rhea" id="RHEA:83859"/>
        <dbReference type="Rhea" id="RHEA-COMP:10698"/>
        <dbReference type="Rhea" id="RHEA-COMP:10700"/>
        <dbReference type="ChEBI" id="CHEBI:15378"/>
        <dbReference type="ChEBI" id="CHEBI:17359"/>
        <dbReference type="ChEBI" id="CHEBI:29919"/>
        <dbReference type="ChEBI" id="CHEBI:29950"/>
        <dbReference type="ChEBI" id="CHEBI:33542"/>
        <dbReference type="ChEBI" id="CHEBI:50058"/>
    </reaction>
</comment>
<comment type="subcellular location">
    <subcellularLocation>
        <location evidence="1">Cytoplasm</location>
    </subcellularLocation>
</comment>
<comment type="similarity">
    <text evidence="1">Belongs to the GlpE family.</text>
</comment>